<proteinExistence type="inferred from homology"/>
<name>DPOL_HBVOR</name>
<gene>
    <name evidence="1" type="primary">P</name>
</gene>
<evidence type="ECO:0000255" key="1">
    <source>
        <dbReference type="HAMAP-Rule" id="MF_04073"/>
    </source>
</evidence>
<evidence type="ECO:0000256" key="2">
    <source>
        <dbReference type="SAM" id="MobiDB-lite"/>
    </source>
</evidence>
<comment type="function">
    <text evidence="1">Multifunctional enzyme that converts the viral RNA genome into dsDNA in viral cytoplasmic capsids. This enzyme displays a DNA polymerase activity that can copy either DNA or RNA templates, and a ribonuclease H (RNase H) activity that cleaves the RNA strand of RNA-DNA heteroduplexes in a partially processive 3'- to 5'-endonucleasic mode. Neo-synthesized pregenomic RNA (pgRNA) are encapsidated together with the P protein, and reverse-transcribed inside the nucleocapsid. Initiation of reverse-transcription occurs first by binding the epsilon loop on the pgRNA genome, and is initiated by protein priming, thereby the 5'-end of (-)DNA is covalently linked to P protein. Partial (+)DNA is synthesized from the (-)DNA template and generates the relaxed circular DNA (RC-DNA) genome. After budding and infection, the RC-DNA migrates in the nucleus, and is converted into a plasmid-like covalently closed circular DNA (cccDNA). The activity of P protein does not seem to be necessary for cccDNA generation, and is presumably released from (+)DNA by host nuclear DNA repair machinery.</text>
</comment>
<comment type="catalytic activity">
    <reaction evidence="1">
        <text>DNA(n) + a 2'-deoxyribonucleoside 5'-triphosphate = DNA(n+1) + diphosphate</text>
        <dbReference type="Rhea" id="RHEA:22508"/>
        <dbReference type="Rhea" id="RHEA-COMP:17339"/>
        <dbReference type="Rhea" id="RHEA-COMP:17340"/>
        <dbReference type="ChEBI" id="CHEBI:33019"/>
        <dbReference type="ChEBI" id="CHEBI:61560"/>
        <dbReference type="ChEBI" id="CHEBI:173112"/>
        <dbReference type="EC" id="2.7.7.7"/>
    </reaction>
</comment>
<comment type="catalytic activity">
    <reaction evidence="1">
        <text>DNA(n) + a 2'-deoxyribonucleoside 5'-triphosphate = DNA(n+1) + diphosphate</text>
        <dbReference type="Rhea" id="RHEA:22508"/>
        <dbReference type="Rhea" id="RHEA-COMP:17339"/>
        <dbReference type="Rhea" id="RHEA-COMP:17340"/>
        <dbReference type="ChEBI" id="CHEBI:33019"/>
        <dbReference type="ChEBI" id="CHEBI:61560"/>
        <dbReference type="ChEBI" id="CHEBI:173112"/>
        <dbReference type="EC" id="2.7.7.49"/>
    </reaction>
</comment>
<comment type="catalytic activity">
    <reaction evidence="1">
        <text>Endonucleolytic cleavage to 5'-phosphomonoester.</text>
        <dbReference type="EC" id="3.1.26.4"/>
    </reaction>
</comment>
<comment type="activity regulation">
    <text evidence="1">Activated by host HSP70 and HSP40 in vitro to be able to bind the epsilon loop of the pgRNA. Because deletion of the RNase H region renders the protein partly chaperone-independent, the chaperones may be needed indirectly to relieve occlusion of the RNA-binding site by this domain. Inhibited by several reverse-transcriptase inhibitors: Lamivudine, Adefovir and Entecavir.</text>
</comment>
<comment type="domain">
    <text evidence="1">Terminal protein domain (TP) is hepadnavirus-specific. Spacer domain is highly variable and separates the TP and RT domains. Polymerase/reverse-transcriptase domain (RT) and ribonuclease H domain (RH) are similar to retrovirus reverse transcriptase/RNase H.</text>
</comment>
<comment type="domain">
    <text evidence="1">The polymerase/reverse transcriptase (RT) and ribonuclease H (RH) domains are structured in five subdomains: finger, palm, thumb, connection and RNase H. Within the palm subdomain, the 'primer grip' region is thought to be involved in the positioning of the primer terminus for accommodating the incoming nucleotide. The RH domain stabilizes the association of RT with primer-template.</text>
</comment>
<comment type="miscellaneous">
    <text evidence="1">Hepadnaviral virions contain probably just one P protein molecule per particle.</text>
</comment>
<comment type="similarity">
    <text evidence="1">Belongs to the hepadnaviridae P protein family.</text>
</comment>
<feature type="chain" id="PRO_0000323285" description="Protein P">
    <location>
        <begin position="1"/>
        <end position="832"/>
    </location>
</feature>
<feature type="domain" description="Reverse transcriptase" evidence="1">
    <location>
        <begin position="346"/>
        <end position="589"/>
    </location>
</feature>
<feature type="region of interest" description="Terminal protein domain (TP)" evidence="1">
    <location>
        <begin position="1"/>
        <end position="177"/>
    </location>
</feature>
<feature type="region of interest" description="Spacer" evidence="1">
    <location>
        <begin position="178"/>
        <end position="335"/>
    </location>
</feature>
<feature type="region of interest" description="Disordered" evidence="2">
    <location>
        <begin position="198"/>
        <end position="264"/>
    </location>
</feature>
<feature type="region of interest" description="Polymerase/reverse transcriptase domain (RT)" evidence="1">
    <location>
        <begin position="336"/>
        <end position="679"/>
    </location>
</feature>
<feature type="binding site" evidence="1">
    <location>
        <position position="418"/>
    </location>
    <ligand>
        <name>Mg(2+)</name>
        <dbReference type="ChEBI" id="CHEBI:18420"/>
        <note>catalytic</note>
    </ligand>
</feature>
<feature type="binding site" evidence="1">
    <location>
        <position position="540"/>
    </location>
    <ligand>
        <name>Mg(2+)</name>
        <dbReference type="ChEBI" id="CHEBI:18420"/>
        <note>catalytic</note>
    </ligand>
</feature>
<feature type="binding site" evidence="1">
    <location>
        <position position="541"/>
    </location>
    <ligand>
        <name>Mg(2+)</name>
        <dbReference type="ChEBI" id="CHEBI:18420"/>
        <note>catalytic</note>
    </ligand>
</feature>
<feature type="site" description="Priming of reverse-transcription by covalently linking the first nucleotide of the (-)DNA" evidence="1">
    <location>
        <position position="63"/>
    </location>
</feature>
<protein>
    <recommendedName>
        <fullName evidence="1">Protein P</fullName>
    </recommendedName>
    <domain>
        <recommendedName>
            <fullName evidence="1">DNA-directed DNA polymerase</fullName>
            <ecNumber evidence="1">2.7.7.7</ecNumber>
        </recommendedName>
    </domain>
    <domain>
        <recommendedName>
            <fullName evidence="1">RNA-directed DNA polymerase</fullName>
            <ecNumber evidence="1">2.7.7.49</ecNumber>
        </recommendedName>
    </domain>
    <domain>
        <recommendedName>
            <fullName evidence="1">Ribonuclease H</fullName>
            <ecNumber evidence="1">3.1.26.4</ecNumber>
        </recommendedName>
    </domain>
</protein>
<keyword id="KW-0235">DNA replication</keyword>
<keyword id="KW-0238">DNA-binding</keyword>
<keyword id="KW-0239">DNA-directed DNA polymerase</keyword>
<keyword id="KW-0255">Endonuclease</keyword>
<keyword id="KW-0945">Host-virus interaction</keyword>
<keyword id="KW-0378">Hydrolase</keyword>
<keyword id="KW-1090">Inhibition of host innate immune response by virus</keyword>
<keyword id="KW-1113">Inhibition of host RLR pathway by virus</keyword>
<keyword id="KW-0460">Magnesium</keyword>
<keyword id="KW-0479">Metal-binding</keyword>
<keyword id="KW-0511">Multifunctional enzyme</keyword>
<keyword id="KW-0540">Nuclease</keyword>
<keyword id="KW-0548">Nucleotidyltransferase</keyword>
<keyword id="KW-0695">RNA-directed DNA polymerase</keyword>
<keyword id="KW-0808">Transferase</keyword>
<keyword id="KW-0899">Viral immunoevasion</keyword>
<reference key="1">
    <citation type="journal article" date="2001" name="J. Gen. Virol.">
        <title>Analysis of two genomic variants of orang-utan hepadnavirus and their relationship to other primate hepatitis B-like viruses.</title>
        <authorList>
            <person name="Verschoor E.J."/>
            <person name="Warren K.S."/>
            <person name="Langenhuijzen S."/>
            <person name="Heriyanto X."/>
            <person name="Swan R.A."/>
            <person name="Heeney J.L."/>
        </authorList>
    </citation>
    <scope>NUCLEOTIDE SEQUENCE [GENOMIC DNA]</scope>
</reference>
<reference key="2">
    <citation type="journal article" date="2007" name="World J. Gastroenterol.">
        <title>Hepatitis B virus replication.</title>
        <authorList>
            <person name="Beck J."/>
            <person name="Nassal M."/>
        </authorList>
    </citation>
    <scope>REVIEW</scope>
</reference>
<organismHost>
    <name type="scientific">Pongo pygmaeus</name>
    <name type="common">Bornean orangutan</name>
    <dbReference type="NCBI Taxonomy" id="9600"/>
</organismHost>
<sequence length="832" mass="93147">MPLSCQHFRKLLLLDEEAGPLEEELPRLADEGLNHRVAEDLNLQLPNVSIPWTHKVGNFTGLYSSTAPVFNPNWQTPSFPDIHLHQDIINKCEQLVGPLTVNEKRRLKLIMPARFYPNSTKYFPPDKGIKPYYPEHGVNHYFQARHYLHTLWKAGVLYKRETTRSASFCGSPYSWEQELQHGAEPFCHQPFGILPRASIGPAVPSQHKQSRLGLQSQQGHLARSHQGRSGSIWARVHSTSRRSFGVEPAGSGRNHNTASSSSSCLHQSAVRKAAYSHLSTFERHSSSGHAVELHGFPPSSAGSQSKGSVFPCWWLQFRDSEPCSDNCLSHIVNLLEDWGPCTEHGEHLIRIPRTPARVTGGVFLVDKNPHNSSESRLVVDFSQFSRGSTRVSWPKFAVPNLQSLTNLLSSNLSWLSLDVSAAFYHLPLHPAAMPHLLVGSSGLPRYVARLSSTSRNHHHQRGTMQNLHDFCSRNLFVSLMLLYKTFGRKLHLYSHPTIMGFRKIPMGVGLSPFLLAQFTSALCSVVRRAFPHCLAFSYMDDMVLGAKSVQHLESLYTAVTNFLLSLGIHLNPGKTKRWGYSLHFMGYVIGSWGTLPQDHIVQKIKQCFRKLPVNRPIDWKVCQRIVGLLGFAAPFTQCGYPALMPLYNCIHNRQAFTFSPTYKAFLRTQYLTLYPVARQRPGLCQVFADATPTGWGLALGPQRMRGTFVAPLPIHTAELLAACFARSRSGANIIGTDNSVVLSRKYTSFPWLLGCAANWILRGTSFVYVPSALNPADDPSRGRLGLYRPLLRLPFRPTTGRTSLYAVSPSVPSHLPVRVHFASPLHVAWRPP</sequence>
<accession>Q9J5S2</accession>
<dbReference type="EC" id="2.7.7.7" evidence="1"/>
<dbReference type="EC" id="2.7.7.49" evidence="1"/>
<dbReference type="EC" id="3.1.26.4" evidence="1"/>
<dbReference type="EMBL" id="AF193863">
    <property type="protein sequence ID" value="AAF33117.1"/>
    <property type="molecule type" value="Genomic_DNA"/>
</dbReference>
<dbReference type="Proteomes" id="UP000001183">
    <property type="component" value="Genome"/>
</dbReference>
<dbReference type="GO" id="GO:0003677">
    <property type="term" value="F:DNA binding"/>
    <property type="evidence" value="ECO:0007669"/>
    <property type="project" value="UniProtKB-UniRule"/>
</dbReference>
<dbReference type="GO" id="GO:0003887">
    <property type="term" value="F:DNA-directed DNA polymerase activity"/>
    <property type="evidence" value="ECO:0007669"/>
    <property type="project" value="UniProtKB-UniRule"/>
</dbReference>
<dbReference type="GO" id="GO:0046872">
    <property type="term" value="F:metal ion binding"/>
    <property type="evidence" value="ECO:0007669"/>
    <property type="project" value="UniProtKB-UniRule"/>
</dbReference>
<dbReference type="GO" id="GO:0003964">
    <property type="term" value="F:RNA-directed DNA polymerase activity"/>
    <property type="evidence" value="ECO:0007669"/>
    <property type="project" value="UniProtKB-UniRule"/>
</dbReference>
<dbReference type="GO" id="GO:0004523">
    <property type="term" value="F:RNA-DNA hybrid ribonuclease activity"/>
    <property type="evidence" value="ECO:0007669"/>
    <property type="project" value="UniProtKB-UniRule"/>
</dbReference>
<dbReference type="GO" id="GO:0006260">
    <property type="term" value="P:DNA replication"/>
    <property type="evidence" value="ECO:0007669"/>
    <property type="project" value="UniProtKB-UniRule"/>
</dbReference>
<dbReference type="GO" id="GO:0052170">
    <property type="term" value="P:symbiont-mediated suppression of host innate immune response"/>
    <property type="evidence" value="ECO:0007669"/>
    <property type="project" value="UniProtKB-UniRule"/>
</dbReference>
<dbReference type="FunFam" id="3.30.70.270:FF:000009">
    <property type="entry name" value="Protein P"/>
    <property type="match status" value="1"/>
</dbReference>
<dbReference type="Gene3D" id="3.30.70.270">
    <property type="match status" value="1"/>
</dbReference>
<dbReference type="HAMAP" id="MF_04073">
    <property type="entry name" value="HBV_DPOL"/>
    <property type="match status" value="1"/>
</dbReference>
<dbReference type="InterPro" id="IPR043502">
    <property type="entry name" value="DNA/RNA_pol_sf"/>
</dbReference>
<dbReference type="InterPro" id="IPR001462">
    <property type="entry name" value="DNApol_viral_C"/>
</dbReference>
<dbReference type="InterPro" id="IPR000201">
    <property type="entry name" value="DNApol_viral_N"/>
</dbReference>
<dbReference type="InterPro" id="IPR037531">
    <property type="entry name" value="HBV_DPOL"/>
</dbReference>
<dbReference type="InterPro" id="IPR043128">
    <property type="entry name" value="Rev_trsase/Diguanyl_cyclase"/>
</dbReference>
<dbReference type="InterPro" id="IPR000477">
    <property type="entry name" value="RT_dom"/>
</dbReference>
<dbReference type="InterPro" id="IPR051320">
    <property type="entry name" value="Viral_Replic_Matur_Polypro"/>
</dbReference>
<dbReference type="PANTHER" id="PTHR33064">
    <property type="entry name" value="POL PROTEIN"/>
    <property type="match status" value="1"/>
</dbReference>
<dbReference type="PANTHER" id="PTHR33064:SF37">
    <property type="entry name" value="RIBONUCLEASE H"/>
    <property type="match status" value="1"/>
</dbReference>
<dbReference type="Pfam" id="PF00336">
    <property type="entry name" value="DNA_pol_viral_C"/>
    <property type="match status" value="1"/>
</dbReference>
<dbReference type="Pfam" id="PF00242">
    <property type="entry name" value="DNA_pol_viral_N"/>
    <property type="match status" value="1"/>
</dbReference>
<dbReference type="Pfam" id="PF00078">
    <property type="entry name" value="RVT_1"/>
    <property type="match status" value="1"/>
</dbReference>
<dbReference type="SUPFAM" id="SSF56672">
    <property type="entry name" value="DNA/RNA polymerases"/>
    <property type="match status" value="1"/>
</dbReference>
<dbReference type="PROSITE" id="PS50878">
    <property type="entry name" value="RT_POL"/>
    <property type="match status" value="1"/>
</dbReference>
<organism>
    <name type="scientific">Orangutan hepatitis B virus (isolate Somad)</name>
    <name type="common">HBVoru</name>
    <dbReference type="NCBI Taxonomy" id="489545"/>
    <lineage>
        <taxon>Viruses</taxon>
        <taxon>Riboviria</taxon>
        <taxon>Pararnavirae</taxon>
        <taxon>Artverviricota</taxon>
        <taxon>Revtraviricetes</taxon>
        <taxon>Blubervirales</taxon>
        <taxon>Hepadnaviridae</taxon>
        <taxon>Orthohepadnavirus</taxon>
        <taxon>Hepatitis B virus</taxon>
    </lineage>
</organism>